<keyword id="KW-0158">Chromosome</keyword>
<keyword id="KW-0217">Developmental protein</keyword>
<keyword id="KW-0221">Differentiation</keyword>
<keyword id="KW-0226">DNA condensation</keyword>
<keyword id="KW-0238">DNA-binding</keyword>
<keyword id="KW-0544">Nucleosome core</keyword>
<keyword id="KW-0539">Nucleus</keyword>
<keyword id="KW-0744">Spermatogenesis</keyword>
<organism>
    <name type="scientific">Dasykaluta rosamondae</name>
    <name type="common">Little red marsupial mouse</name>
    <name type="synonym">Antechinus rosamondae</name>
    <dbReference type="NCBI Taxonomy" id="33560"/>
    <lineage>
        <taxon>Eukaryota</taxon>
        <taxon>Metazoa</taxon>
        <taxon>Chordata</taxon>
        <taxon>Craniata</taxon>
        <taxon>Vertebrata</taxon>
        <taxon>Euteleostomi</taxon>
        <taxon>Mammalia</taxon>
        <taxon>Metatheria</taxon>
        <taxon>Dasyuromorphia</taxon>
        <taxon>Dasyuridae</taxon>
        <taxon>Dasykaluta</taxon>
    </lineage>
</organism>
<sequence>MARYRRHSRSRSRSRYRRRRRRRSRHRNRRRTYRRSRRHSRRRRGRRRGYSRRRYSRRGRRRY</sequence>
<feature type="chain" id="PRO_0000191465" description="Sperm protamine P1">
    <location>
        <begin position="1"/>
        <end position="63"/>
    </location>
</feature>
<feature type="region of interest" description="Disordered" evidence="1">
    <location>
        <begin position="1"/>
        <end position="63"/>
    </location>
</feature>
<comment type="function">
    <text>Protamines substitute for histones in the chromatin of sperm during the haploid phase of spermatogenesis. They compact sperm DNA into a highly condensed, stable and inactive complex.</text>
</comment>
<comment type="subcellular location">
    <subcellularLocation>
        <location>Nucleus</location>
    </subcellularLocation>
    <subcellularLocation>
        <location>Chromosome</location>
    </subcellularLocation>
</comment>
<comment type="tissue specificity">
    <text>Testis.</text>
</comment>
<comment type="similarity">
    <text evidence="2">Belongs to the protamine P1 family.</text>
</comment>
<evidence type="ECO:0000256" key="1">
    <source>
        <dbReference type="SAM" id="MobiDB-lite"/>
    </source>
</evidence>
<evidence type="ECO:0000305" key="2"/>
<accession>P67830</accession>
<accession>P42134</accession>
<accession>P42144</accession>
<accession>P42149</accession>
<name>HSP1_DASRO</name>
<protein>
    <recommendedName>
        <fullName>Sperm protamine P1</fullName>
    </recommendedName>
</protein>
<dbReference type="EMBL" id="L35325">
    <property type="protein sequence ID" value="AAA74605.1"/>
    <property type="molecule type" value="Genomic_DNA"/>
</dbReference>
<dbReference type="GO" id="GO:0000786">
    <property type="term" value="C:nucleosome"/>
    <property type="evidence" value="ECO:0007669"/>
    <property type="project" value="UniProtKB-KW"/>
</dbReference>
<dbReference type="GO" id="GO:0005634">
    <property type="term" value="C:nucleus"/>
    <property type="evidence" value="ECO:0007669"/>
    <property type="project" value="UniProtKB-SubCell"/>
</dbReference>
<dbReference type="GO" id="GO:0003677">
    <property type="term" value="F:DNA binding"/>
    <property type="evidence" value="ECO:0007669"/>
    <property type="project" value="UniProtKB-KW"/>
</dbReference>
<dbReference type="GO" id="GO:0030261">
    <property type="term" value="P:chromosome condensation"/>
    <property type="evidence" value="ECO:0007669"/>
    <property type="project" value="UniProtKB-KW"/>
</dbReference>
<dbReference type="GO" id="GO:0035092">
    <property type="term" value="P:sperm DNA condensation"/>
    <property type="evidence" value="ECO:0007669"/>
    <property type="project" value="InterPro"/>
</dbReference>
<dbReference type="InterPro" id="IPR000221">
    <property type="entry name" value="Protamine_P1"/>
</dbReference>
<dbReference type="PROSITE" id="PS00048">
    <property type="entry name" value="PROTAMINE_P1"/>
    <property type="match status" value="1"/>
</dbReference>
<proteinExistence type="evidence at transcript level"/>
<gene>
    <name type="primary">PRM1</name>
</gene>
<reference key="1">
    <citation type="journal article" date="1995" name="Proc. R. Soc. B">
        <title>Molecular phylogeny and evolution of marsupial protamine P1 genes.</title>
        <authorList>
            <person name="Retief J.D."/>
            <person name="Krajewski C."/>
            <person name="Westerman M."/>
            <person name="Winkfein R.J."/>
            <person name="Dixon G.H."/>
        </authorList>
    </citation>
    <scope>NUCLEOTIDE SEQUENCE [GENOMIC DNA]</scope>
    <source>
        <tissue>Sperm</tissue>
    </source>
</reference>